<proteinExistence type="predicted"/>
<name>YSX4_CAEEL</name>
<reference key="1">
    <citation type="journal article" date="1998" name="Science">
        <title>Genome sequence of the nematode C. elegans: a platform for investigating biology.</title>
        <authorList>
            <consortium name="The C. elegans sequencing consortium"/>
        </authorList>
    </citation>
    <scope>NUCLEOTIDE SEQUENCE [LARGE SCALE GENOMIC DNA]</scope>
    <source>
        <strain>Bristol N2</strain>
    </source>
</reference>
<keyword id="KW-0472">Membrane</keyword>
<keyword id="KW-1185">Reference proteome</keyword>
<keyword id="KW-0812">Transmembrane</keyword>
<keyword id="KW-1133">Transmembrane helix</keyword>
<organism>
    <name type="scientific">Caenorhabditis elegans</name>
    <dbReference type="NCBI Taxonomy" id="6239"/>
    <lineage>
        <taxon>Eukaryota</taxon>
        <taxon>Metazoa</taxon>
        <taxon>Ecdysozoa</taxon>
        <taxon>Nematoda</taxon>
        <taxon>Chromadorea</taxon>
        <taxon>Rhabditida</taxon>
        <taxon>Rhabditina</taxon>
        <taxon>Rhabditomorpha</taxon>
        <taxon>Rhabditoidea</taxon>
        <taxon>Rhabditidae</taxon>
        <taxon>Peloderinae</taxon>
        <taxon>Caenorhabditis</taxon>
    </lineage>
</organism>
<gene>
    <name type="ORF">T28D9.4</name>
</gene>
<dbReference type="EMBL" id="FO081595">
    <property type="protein sequence ID" value="CCD72704.1"/>
    <property type="molecule type" value="Genomic_DNA"/>
</dbReference>
<dbReference type="PIR" id="T16949">
    <property type="entry name" value="T16949"/>
</dbReference>
<dbReference type="RefSeq" id="NP_001317761.1">
    <property type="nucleotide sequence ID" value="NM_001330950.1"/>
</dbReference>
<dbReference type="BioGRID" id="39409">
    <property type="interactions" value="2"/>
</dbReference>
<dbReference type="FunCoup" id="Q10023">
    <property type="interactions" value="223"/>
</dbReference>
<dbReference type="PaxDb" id="6239-T28D9.4a"/>
<dbReference type="EnsemblMetazoa" id="T28D9.4a.1">
    <property type="protein sequence ID" value="T28D9.4a.1"/>
    <property type="gene ID" value="WBGene00020896"/>
</dbReference>
<dbReference type="GeneID" id="28661658"/>
<dbReference type="KEGG" id="cel:CELE_T28D9.4"/>
<dbReference type="UCSC" id="T28D9.4a">
    <property type="organism name" value="c. elegans"/>
</dbReference>
<dbReference type="AGR" id="WB:WBGene00020896"/>
<dbReference type="CTD" id="28661658"/>
<dbReference type="WormBase" id="T28D9.4a">
    <property type="protein sequence ID" value="CE51743"/>
    <property type="gene ID" value="WBGene00020896"/>
</dbReference>
<dbReference type="eggNOG" id="ENOG502T3AC">
    <property type="taxonomic scope" value="Eukaryota"/>
</dbReference>
<dbReference type="HOGENOM" id="CLU_584269_0_0_1"/>
<dbReference type="InParanoid" id="Q10023"/>
<dbReference type="OrthoDB" id="5851198at2759"/>
<dbReference type="PRO" id="PR:Q10023"/>
<dbReference type="Proteomes" id="UP000001940">
    <property type="component" value="Chromosome II"/>
</dbReference>
<dbReference type="Bgee" id="WBGene00020896">
    <property type="expression patterns" value="Expressed in germ line (C elegans) and 4 other cell types or tissues"/>
</dbReference>
<dbReference type="ExpressionAtlas" id="Q10023">
    <property type="expression patterns" value="baseline and differential"/>
</dbReference>
<dbReference type="GO" id="GO:0016020">
    <property type="term" value="C:membrane"/>
    <property type="evidence" value="ECO:0007669"/>
    <property type="project" value="UniProtKB-SubCell"/>
</dbReference>
<feature type="chain" id="PRO_0000065486" description="Uncharacterized protein T28D9.4">
    <location>
        <begin position="1"/>
        <end position="468"/>
    </location>
</feature>
<feature type="transmembrane region" description="Helical" evidence="1">
    <location>
        <begin position="59"/>
        <end position="79"/>
    </location>
</feature>
<feature type="transmembrane region" description="Helical" evidence="1">
    <location>
        <begin position="135"/>
        <end position="155"/>
    </location>
</feature>
<feature type="transmembrane region" description="Helical" evidence="1">
    <location>
        <begin position="215"/>
        <end position="235"/>
    </location>
</feature>
<feature type="transmembrane region" description="Helical" evidence="1">
    <location>
        <begin position="297"/>
        <end position="317"/>
    </location>
</feature>
<feature type="transmembrane region" description="Helical" evidence="1">
    <location>
        <begin position="348"/>
        <end position="368"/>
    </location>
</feature>
<feature type="transmembrane region" description="Helical" evidence="1">
    <location>
        <begin position="385"/>
        <end position="405"/>
    </location>
</feature>
<sequence>MVRWKKPKRFLCRKTQDYERIDDIENNDEDSDDDVILEINHDGEHEDNYRNPMIRMAYIPIVIIAVIYSSFIFFFALFIEASAHTNSKCSEAHEKEKMSSGLLTPPMKHILEDRTKYKNEIKLLKTFNVHLTYSTWINSILEILALIYSFLLLLVDRQYLYPLSQVILYLFTRINFVYTDIYGRFFSPSDVVGAITTEVIYDLIRWQSESKLFKVFPFTPCPLPLLLFPIFLSILQVFANQKHTHVYETVLLIFFRIMTRFAGRRPFILSYQVLRSGIASFQSATSHDIAKTLNKVTHCCLNVFASSAFFVLLMVLVDKQGLDKTPKCLAALYAFAMWMQLATVRYRHFIPLILTVVIELVITGLVSYQTGEFIFSHTAEVKDYVFTVMFTIIAVFRFVFIIILFKVLIYKNPPHSLTTTVLLKPTNIPVTFSSIKAPQELDPTNPYYPQTVYNSNQSKNNLLPLTRD</sequence>
<accession>Q10023</accession>
<comment type="subcellular location">
    <subcellularLocation>
        <location evidence="2">Membrane</location>
        <topology evidence="2">Multi-pass membrane protein</topology>
    </subcellularLocation>
</comment>
<evidence type="ECO:0000255" key="1"/>
<evidence type="ECO:0000305" key="2"/>
<protein>
    <recommendedName>
        <fullName>Uncharacterized protein T28D9.4</fullName>
    </recommendedName>
</protein>